<organism>
    <name type="scientific">Rattus norvegicus</name>
    <name type="common">Rat</name>
    <dbReference type="NCBI Taxonomy" id="10116"/>
    <lineage>
        <taxon>Eukaryota</taxon>
        <taxon>Metazoa</taxon>
        <taxon>Chordata</taxon>
        <taxon>Craniata</taxon>
        <taxon>Vertebrata</taxon>
        <taxon>Euteleostomi</taxon>
        <taxon>Mammalia</taxon>
        <taxon>Eutheria</taxon>
        <taxon>Euarchontoglires</taxon>
        <taxon>Glires</taxon>
        <taxon>Rodentia</taxon>
        <taxon>Myomorpha</taxon>
        <taxon>Muroidea</taxon>
        <taxon>Muridae</taxon>
        <taxon>Murinae</taxon>
        <taxon>Rattus</taxon>
    </lineage>
</organism>
<gene>
    <name type="primary">Phyhd1</name>
</gene>
<reference key="1">
    <citation type="journal article" date="2004" name="Genome Res.">
        <title>The status, quality, and expansion of the NIH full-length cDNA project: the Mammalian Gene Collection (MGC).</title>
        <authorList>
            <consortium name="The MGC Project Team"/>
        </authorList>
    </citation>
    <scope>NUCLEOTIDE SEQUENCE [LARGE SCALE MRNA]</scope>
    <source>
        <tissue>Liver</tissue>
    </source>
</reference>
<dbReference type="EC" id="1.14.11.-" evidence="2"/>
<dbReference type="EMBL" id="BC091389">
    <property type="protein sequence ID" value="AAH91389.1"/>
    <property type="molecule type" value="mRNA"/>
</dbReference>
<dbReference type="RefSeq" id="NP_001013099.1">
    <property type="nucleotide sequence ID" value="NM_001013081.1"/>
</dbReference>
<dbReference type="RefSeq" id="XP_006233841.1">
    <property type="nucleotide sequence ID" value="XM_006233779.4"/>
</dbReference>
<dbReference type="RefSeq" id="XP_006233842.1">
    <property type="nucleotide sequence ID" value="XM_006233780.3"/>
</dbReference>
<dbReference type="RefSeq" id="XP_017447138.1">
    <property type="nucleotide sequence ID" value="XM_017591649.2"/>
</dbReference>
<dbReference type="SMR" id="Q5BJP9"/>
<dbReference type="FunCoup" id="Q5BJP9">
    <property type="interactions" value="423"/>
</dbReference>
<dbReference type="STRING" id="10116.ENSRNOP00000022552"/>
<dbReference type="iPTMnet" id="Q5BJP9"/>
<dbReference type="PhosphoSitePlus" id="Q5BJP9"/>
<dbReference type="PaxDb" id="10116-ENSRNOP00000022552"/>
<dbReference type="GeneID" id="296621"/>
<dbReference type="KEGG" id="rno:296621"/>
<dbReference type="UCSC" id="RGD:1310377">
    <property type="organism name" value="rat"/>
</dbReference>
<dbReference type="AGR" id="RGD:1310377"/>
<dbReference type="CTD" id="254295"/>
<dbReference type="RGD" id="1310377">
    <property type="gene designation" value="Phyhd1"/>
</dbReference>
<dbReference type="VEuPathDB" id="HostDB:ENSRNOG00000016794"/>
<dbReference type="eggNOG" id="KOG3290">
    <property type="taxonomic scope" value="Eukaryota"/>
</dbReference>
<dbReference type="HOGENOM" id="CLU_048953_0_0_1"/>
<dbReference type="InParanoid" id="Q5BJP9"/>
<dbReference type="PhylomeDB" id="Q5BJP9"/>
<dbReference type="PRO" id="PR:Q5BJP9"/>
<dbReference type="Proteomes" id="UP000002494">
    <property type="component" value="Chromosome 3"/>
</dbReference>
<dbReference type="Bgee" id="ENSRNOG00000016794">
    <property type="expression patterns" value="Expressed in adult mammalian kidney and 19 other cell types or tissues"/>
</dbReference>
<dbReference type="GO" id="GO:0016706">
    <property type="term" value="F:2-oxoglutarate-dependent dioxygenase activity"/>
    <property type="evidence" value="ECO:0000266"/>
    <property type="project" value="RGD"/>
</dbReference>
<dbReference type="GO" id="GO:0046872">
    <property type="term" value="F:metal ion binding"/>
    <property type="evidence" value="ECO:0007669"/>
    <property type="project" value="UniProtKB-KW"/>
</dbReference>
<dbReference type="Gene3D" id="2.60.120.620">
    <property type="entry name" value="q2cbj1_9rhob like domain"/>
    <property type="match status" value="1"/>
</dbReference>
<dbReference type="InterPro" id="IPR008775">
    <property type="entry name" value="Phytyl_CoA_dOase-like"/>
</dbReference>
<dbReference type="PANTHER" id="PTHR20883">
    <property type="entry name" value="PHYTANOYL-COA DIOXYGENASE DOMAIN CONTAINING 1"/>
    <property type="match status" value="1"/>
</dbReference>
<dbReference type="PANTHER" id="PTHR20883:SF15">
    <property type="entry name" value="PHYTANOYL-COA DIOXYGENASE DOMAIN-CONTAINING PROTEIN 1"/>
    <property type="match status" value="1"/>
</dbReference>
<dbReference type="Pfam" id="PF05721">
    <property type="entry name" value="PhyH"/>
    <property type="match status" value="1"/>
</dbReference>
<dbReference type="SUPFAM" id="SSF51197">
    <property type="entry name" value="Clavaminate synthase-like"/>
    <property type="match status" value="1"/>
</dbReference>
<protein>
    <recommendedName>
        <fullName evidence="2">Phytanoyl-CoA dioxygenase domain-containing protein 1</fullName>
        <shortName evidence="2">Protein PHYHD1</shortName>
        <ecNumber evidence="2">1.14.11.-</ecNumber>
    </recommendedName>
</protein>
<comment type="function">
    <text evidence="2">2-oxoglutarate(2OG)-dependent dioxygenase that catalyzes the conversion of 2-oxoglutarate to succinate and CO(2) in an iron-dependent manner. However, does not couple 2OG turnover to the hydroxylation of acyl-coenzyme A derivatives, implying that it is not directly involved in phytanoyl coenzyme-A metabolism. Does not show detectable activity towards fatty acid CoA thioesters.</text>
</comment>
<comment type="cofactor">
    <cofactor evidence="2">
        <name>Fe cation</name>
        <dbReference type="ChEBI" id="CHEBI:24875"/>
    </cofactor>
</comment>
<comment type="similarity">
    <text evidence="3">Belongs to the PhyH family. PHYHD1 subfamily.</text>
</comment>
<feature type="chain" id="PRO_0000313635" description="Phytanoyl-CoA dioxygenase domain-containing protein 1">
    <location>
        <begin position="1"/>
        <end position="291"/>
    </location>
</feature>
<feature type="binding site" evidence="1">
    <location>
        <position position="102"/>
    </location>
    <ligand>
        <name>2-oxoglutarate</name>
        <dbReference type="ChEBI" id="CHEBI:16810"/>
    </ligand>
</feature>
<feature type="binding site" evidence="1">
    <location>
        <position position="141"/>
    </location>
    <ligand>
        <name>2-oxoglutarate</name>
        <dbReference type="ChEBI" id="CHEBI:16810"/>
    </ligand>
</feature>
<feature type="binding site" evidence="1">
    <location>
        <begin position="156"/>
        <end position="158"/>
    </location>
    <ligand>
        <name>2-oxoglutarate</name>
        <dbReference type="ChEBI" id="CHEBI:16810"/>
    </ligand>
</feature>
<feature type="binding site" evidence="1">
    <location>
        <position position="156"/>
    </location>
    <ligand>
        <name>Fe cation</name>
        <dbReference type="ChEBI" id="CHEBI:24875"/>
    </ligand>
</feature>
<feature type="binding site" evidence="1">
    <location>
        <position position="158"/>
    </location>
    <ligand>
        <name>Fe cation</name>
        <dbReference type="ChEBI" id="CHEBI:24875"/>
    </ligand>
</feature>
<feature type="binding site" evidence="1">
    <location>
        <position position="174"/>
    </location>
    <ligand>
        <name>2-oxoglutarate</name>
        <dbReference type="ChEBI" id="CHEBI:16810"/>
    </ligand>
</feature>
<feature type="binding site" evidence="1">
    <location>
        <position position="246"/>
    </location>
    <ligand>
        <name>Fe cation</name>
        <dbReference type="ChEBI" id="CHEBI:24875"/>
    </ligand>
</feature>
<feature type="binding site" evidence="1">
    <location>
        <position position="248"/>
    </location>
    <ligand>
        <name>2-oxoglutarate</name>
        <dbReference type="ChEBI" id="CHEBI:16810"/>
    </ligand>
</feature>
<feature type="binding site" evidence="1">
    <location>
        <position position="257"/>
    </location>
    <ligand>
        <name>2-oxoglutarate</name>
        <dbReference type="ChEBI" id="CHEBI:16810"/>
    </ligand>
</feature>
<feature type="modified residue" description="Phosphothreonine" evidence="2">
    <location>
        <position position="55"/>
    </location>
</feature>
<name>PHYD1_RAT</name>
<accession>Q5BJP9</accession>
<keyword id="KW-0223">Dioxygenase</keyword>
<keyword id="KW-0408">Iron</keyword>
<keyword id="KW-0479">Metal-binding</keyword>
<keyword id="KW-0560">Oxidoreductase</keyword>
<keyword id="KW-0597">Phosphoprotein</keyword>
<keyword id="KW-1185">Reference proteome</keyword>
<proteinExistence type="evidence at transcript level"/>
<evidence type="ECO:0000250" key="1">
    <source>
        <dbReference type="UniProtKB" id="O14832"/>
    </source>
</evidence>
<evidence type="ECO:0000250" key="2">
    <source>
        <dbReference type="UniProtKB" id="Q5SRE7"/>
    </source>
</evidence>
<evidence type="ECO:0000305" key="3"/>
<sequence length="291" mass="32553">MACLSPSQLKKFQEDGFLLLEGFFTADECVVMQQRIGEIVAEMDVPLHCRTEFSTQEDEQLQTQGNTDYFLSSGDKIRFFFEKGVFDEKGNFLVPPEKSINKIGHALHAHDPVFRSITHSPKVQALVRSLGLQIPVVVQSMYIFKQPHFGGEVSPHQDATFLYTEPLGRVLGLWIATEDAMLENGCLWFIPGSHTSGVSRRMIRAPSDSGPGTSFLGSEPAWDNNLFVPLPVRRGGLVLIHGEVVHKSEQNLSDHSRQAYTFHLMEAAGTVWSPGNWLQPTTELPFPPLYI</sequence>